<feature type="chain" id="PRO_0000401491" description="Protein NLP6">
    <location>
        <begin position="1"/>
        <end position="841"/>
    </location>
</feature>
<feature type="domain" description="RWP-RK" evidence="2">
    <location>
        <begin position="539"/>
        <end position="624"/>
    </location>
</feature>
<feature type="domain" description="PB1" evidence="3">
    <location>
        <begin position="741"/>
        <end position="823"/>
    </location>
</feature>
<feature type="region of interest" description="Disordered" evidence="4">
    <location>
        <begin position="649"/>
        <end position="682"/>
    </location>
</feature>
<feature type="compositionally biased region" description="Polar residues" evidence="4">
    <location>
        <begin position="651"/>
        <end position="662"/>
    </location>
</feature>
<feature type="sequence conflict" description="In Ref. 3; AAM13850." evidence="6" ref="3">
    <original>H</original>
    <variation>Y</variation>
    <location>
        <position position="311"/>
    </location>
</feature>
<organism>
    <name type="scientific">Arabidopsis thaliana</name>
    <name type="common">Mouse-ear cress</name>
    <dbReference type="NCBI Taxonomy" id="3702"/>
    <lineage>
        <taxon>Eukaryota</taxon>
        <taxon>Viridiplantae</taxon>
        <taxon>Streptophyta</taxon>
        <taxon>Embryophyta</taxon>
        <taxon>Tracheophyta</taxon>
        <taxon>Spermatophyta</taxon>
        <taxon>Magnoliopsida</taxon>
        <taxon>eudicotyledons</taxon>
        <taxon>Gunneridae</taxon>
        <taxon>Pentapetalae</taxon>
        <taxon>rosids</taxon>
        <taxon>malvids</taxon>
        <taxon>Brassicales</taxon>
        <taxon>Brassicaceae</taxon>
        <taxon>Camelineae</taxon>
        <taxon>Arabidopsis</taxon>
    </lineage>
</organism>
<accession>Q8RWY4</accession>
<accession>Q8H105</accession>
<accession>Q9SGW2</accession>
<protein>
    <recommendedName>
        <fullName>Protein NLP6</fullName>
        <shortName>AtNLP6</shortName>
    </recommendedName>
    <alternativeName>
        <fullName>NIN-like protein 6</fullName>
    </alternativeName>
    <alternativeName>
        <fullName>Nodule inception protein-like protein 6</fullName>
    </alternativeName>
</protein>
<comment type="function">
    <text evidence="1">Probable transcription factor.</text>
</comment>
<comment type="subcellular location">
    <subcellularLocation>
        <location evidence="2">Nucleus</location>
    </subcellularLocation>
</comment>
<comment type="disruption phenotype">
    <text evidence="5">No visible phenotype.</text>
</comment>
<comment type="sequence caution" evidence="6">
    <conflict type="erroneous gene model prediction">
        <sequence resource="EMBL-CDS" id="AAF19672"/>
    </conflict>
</comment>
<gene>
    <name type="primary">NLP6</name>
    <name type="ordered locus">At1g64530</name>
    <name type="ORF">F1N19.10</name>
</gene>
<evidence type="ECO:0000250" key="1"/>
<evidence type="ECO:0000255" key="2">
    <source>
        <dbReference type="PROSITE-ProRule" id="PRU00852"/>
    </source>
</evidence>
<evidence type="ECO:0000255" key="3">
    <source>
        <dbReference type="PROSITE-ProRule" id="PRU01081"/>
    </source>
</evidence>
<evidence type="ECO:0000256" key="4">
    <source>
        <dbReference type="SAM" id="MobiDB-lite"/>
    </source>
</evidence>
<evidence type="ECO:0000269" key="5">
    <source>
    </source>
</evidence>
<evidence type="ECO:0000305" key="6"/>
<name>NLP6_ARATH</name>
<proteinExistence type="evidence at transcript level"/>
<reference key="1">
    <citation type="journal article" date="2000" name="Nature">
        <title>Sequence and analysis of chromosome 1 of the plant Arabidopsis thaliana.</title>
        <authorList>
            <person name="Theologis A."/>
            <person name="Ecker J.R."/>
            <person name="Palm C.J."/>
            <person name="Federspiel N.A."/>
            <person name="Kaul S."/>
            <person name="White O."/>
            <person name="Alonso J."/>
            <person name="Altafi H."/>
            <person name="Araujo R."/>
            <person name="Bowman C.L."/>
            <person name="Brooks S.Y."/>
            <person name="Buehler E."/>
            <person name="Chan A."/>
            <person name="Chao Q."/>
            <person name="Chen H."/>
            <person name="Cheuk R.F."/>
            <person name="Chin C.W."/>
            <person name="Chung M.K."/>
            <person name="Conn L."/>
            <person name="Conway A.B."/>
            <person name="Conway A.R."/>
            <person name="Creasy T.H."/>
            <person name="Dewar K."/>
            <person name="Dunn P."/>
            <person name="Etgu P."/>
            <person name="Feldblyum T.V."/>
            <person name="Feng J.-D."/>
            <person name="Fong B."/>
            <person name="Fujii C.Y."/>
            <person name="Gill J.E."/>
            <person name="Goldsmith A.D."/>
            <person name="Haas B."/>
            <person name="Hansen N.F."/>
            <person name="Hughes B."/>
            <person name="Huizar L."/>
            <person name="Hunter J.L."/>
            <person name="Jenkins J."/>
            <person name="Johnson-Hopson C."/>
            <person name="Khan S."/>
            <person name="Khaykin E."/>
            <person name="Kim C.J."/>
            <person name="Koo H.L."/>
            <person name="Kremenetskaia I."/>
            <person name="Kurtz D.B."/>
            <person name="Kwan A."/>
            <person name="Lam B."/>
            <person name="Langin-Hooper S."/>
            <person name="Lee A."/>
            <person name="Lee J.M."/>
            <person name="Lenz C.A."/>
            <person name="Li J.H."/>
            <person name="Li Y.-P."/>
            <person name="Lin X."/>
            <person name="Liu S.X."/>
            <person name="Liu Z.A."/>
            <person name="Luros J.S."/>
            <person name="Maiti R."/>
            <person name="Marziali A."/>
            <person name="Militscher J."/>
            <person name="Miranda M."/>
            <person name="Nguyen M."/>
            <person name="Nierman W.C."/>
            <person name="Osborne B.I."/>
            <person name="Pai G."/>
            <person name="Peterson J."/>
            <person name="Pham P.K."/>
            <person name="Rizzo M."/>
            <person name="Rooney T."/>
            <person name="Rowley D."/>
            <person name="Sakano H."/>
            <person name="Salzberg S.L."/>
            <person name="Schwartz J.R."/>
            <person name="Shinn P."/>
            <person name="Southwick A.M."/>
            <person name="Sun H."/>
            <person name="Tallon L.J."/>
            <person name="Tambunga G."/>
            <person name="Toriumi M.J."/>
            <person name="Town C.D."/>
            <person name="Utterback T."/>
            <person name="Van Aken S."/>
            <person name="Vaysberg M."/>
            <person name="Vysotskaia V.S."/>
            <person name="Walker M."/>
            <person name="Wu D."/>
            <person name="Yu G."/>
            <person name="Fraser C.M."/>
            <person name="Venter J.C."/>
            <person name="Davis R.W."/>
        </authorList>
    </citation>
    <scope>NUCLEOTIDE SEQUENCE [LARGE SCALE GENOMIC DNA]</scope>
    <source>
        <strain>cv. Columbia</strain>
    </source>
</reference>
<reference key="2">
    <citation type="journal article" date="2017" name="Plant J.">
        <title>Araport11: a complete reannotation of the Arabidopsis thaliana reference genome.</title>
        <authorList>
            <person name="Cheng C.Y."/>
            <person name="Krishnakumar V."/>
            <person name="Chan A.P."/>
            <person name="Thibaud-Nissen F."/>
            <person name="Schobel S."/>
            <person name="Town C.D."/>
        </authorList>
    </citation>
    <scope>GENOME REANNOTATION</scope>
    <source>
        <strain>cv. Columbia</strain>
    </source>
</reference>
<reference key="3">
    <citation type="journal article" date="2003" name="Science">
        <title>Empirical analysis of transcriptional activity in the Arabidopsis genome.</title>
        <authorList>
            <person name="Yamada K."/>
            <person name="Lim J."/>
            <person name="Dale J.M."/>
            <person name="Chen H."/>
            <person name="Shinn P."/>
            <person name="Palm C.J."/>
            <person name="Southwick A.M."/>
            <person name="Wu H.C."/>
            <person name="Kim C.J."/>
            <person name="Nguyen M."/>
            <person name="Pham P.K."/>
            <person name="Cheuk R.F."/>
            <person name="Karlin-Newmann G."/>
            <person name="Liu S.X."/>
            <person name="Lam B."/>
            <person name="Sakano H."/>
            <person name="Wu T."/>
            <person name="Yu G."/>
            <person name="Miranda M."/>
            <person name="Quach H.L."/>
            <person name="Tripp M."/>
            <person name="Chang C.H."/>
            <person name="Lee J.M."/>
            <person name="Toriumi M.J."/>
            <person name="Chan M.M."/>
            <person name="Tang C.C."/>
            <person name="Onodera C.S."/>
            <person name="Deng J.M."/>
            <person name="Akiyama K."/>
            <person name="Ansari Y."/>
            <person name="Arakawa T."/>
            <person name="Banh J."/>
            <person name="Banno F."/>
            <person name="Bowser L."/>
            <person name="Brooks S.Y."/>
            <person name="Carninci P."/>
            <person name="Chao Q."/>
            <person name="Choy N."/>
            <person name="Enju A."/>
            <person name="Goldsmith A.D."/>
            <person name="Gurjal M."/>
            <person name="Hansen N.F."/>
            <person name="Hayashizaki Y."/>
            <person name="Johnson-Hopson C."/>
            <person name="Hsuan V.W."/>
            <person name="Iida K."/>
            <person name="Karnes M."/>
            <person name="Khan S."/>
            <person name="Koesema E."/>
            <person name="Ishida J."/>
            <person name="Jiang P.X."/>
            <person name="Jones T."/>
            <person name="Kawai J."/>
            <person name="Kamiya A."/>
            <person name="Meyers C."/>
            <person name="Nakajima M."/>
            <person name="Narusaka M."/>
            <person name="Seki M."/>
            <person name="Sakurai T."/>
            <person name="Satou M."/>
            <person name="Tamse R."/>
            <person name="Vaysberg M."/>
            <person name="Wallender E.K."/>
            <person name="Wong C."/>
            <person name="Yamamura Y."/>
            <person name="Yuan S."/>
            <person name="Shinozaki K."/>
            <person name="Davis R.W."/>
            <person name="Theologis A."/>
            <person name="Ecker J.R."/>
        </authorList>
    </citation>
    <scope>NUCLEOTIDE SEQUENCE [LARGE SCALE MRNA]</scope>
    <source>
        <strain>cv. Columbia</strain>
    </source>
</reference>
<reference key="4">
    <citation type="journal article" date="2005" name="J. Mol. Evol.">
        <title>Evolution of NIN-like proteins in Arabidopsis, rice, and Lotus japonicus.</title>
        <authorList>
            <person name="Schauser L."/>
            <person name="Wieloch W."/>
            <person name="Stougaard J."/>
        </authorList>
    </citation>
    <scope>GENE FAMILY</scope>
    <scope>NOMENCLATURE</scope>
</reference>
<reference key="5">
    <citation type="journal article" date="2009" name="Plant J.">
        <title>The nodule inception-like protein 7 modulates nitrate sensing and metabolism in Arabidopsis.</title>
        <authorList>
            <person name="Castaings L."/>
            <person name="Camargo A."/>
            <person name="Pocholle D."/>
            <person name="Gaudon V."/>
            <person name="Texier Y."/>
            <person name="Boutet-Mercey S."/>
            <person name="Taconnat L."/>
            <person name="Renou J.P."/>
            <person name="Daniel-Vedele F."/>
            <person name="Fernandez E."/>
            <person name="Meyer C."/>
            <person name="Krapp A."/>
        </authorList>
    </citation>
    <scope>DISRUPTION PHENOTYPE</scope>
</reference>
<keyword id="KW-0238">DNA-binding</keyword>
<keyword id="KW-0539">Nucleus</keyword>
<keyword id="KW-1185">Reference proteome</keyword>
<keyword id="KW-0804">Transcription</keyword>
<keyword id="KW-0805">Transcription regulation</keyword>
<dbReference type="EMBL" id="AC009519">
    <property type="protein sequence ID" value="AAF19672.1"/>
    <property type="status" value="ALT_SEQ"/>
    <property type="molecule type" value="Genomic_DNA"/>
</dbReference>
<dbReference type="EMBL" id="CP002684">
    <property type="protein sequence ID" value="AEE34250.1"/>
    <property type="molecule type" value="Genomic_DNA"/>
</dbReference>
<dbReference type="EMBL" id="AY091029">
    <property type="protein sequence ID" value="AAM13850.1"/>
    <property type="molecule type" value="mRNA"/>
</dbReference>
<dbReference type="EMBL" id="BT000933">
    <property type="protein sequence ID" value="AAN41333.1"/>
    <property type="molecule type" value="mRNA"/>
</dbReference>
<dbReference type="RefSeq" id="NP_176634.1">
    <property type="nucleotide sequence ID" value="NM_105128.5"/>
</dbReference>
<dbReference type="SMR" id="Q8RWY4"/>
<dbReference type="BioGRID" id="27982">
    <property type="interactions" value="2"/>
</dbReference>
<dbReference type="FunCoup" id="Q8RWY4">
    <property type="interactions" value="5"/>
</dbReference>
<dbReference type="IntAct" id="Q8RWY4">
    <property type="interactions" value="2"/>
</dbReference>
<dbReference type="STRING" id="3702.Q8RWY4"/>
<dbReference type="iPTMnet" id="Q8RWY4"/>
<dbReference type="PaxDb" id="3702-AT1G64530.1"/>
<dbReference type="ProteomicsDB" id="251152"/>
<dbReference type="EnsemblPlants" id="AT1G64530.1">
    <property type="protein sequence ID" value="AT1G64530.1"/>
    <property type="gene ID" value="AT1G64530"/>
</dbReference>
<dbReference type="GeneID" id="842761"/>
<dbReference type="Gramene" id="AT1G64530.1">
    <property type="protein sequence ID" value="AT1G64530.1"/>
    <property type="gene ID" value="AT1G64530"/>
</dbReference>
<dbReference type="KEGG" id="ath:AT1G64530"/>
<dbReference type="Araport" id="AT1G64530"/>
<dbReference type="TAIR" id="AT1G64530">
    <property type="gene designation" value="NLP6"/>
</dbReference>
<dbReference type="eggNOG" id="ENOG502QQ6H">
    <property type="taxonomic scope" value="Eukaryota"/>
</dbReference>
<dbReference type="HOGENOM" id="CLU_008971_0_0_1"/>
<dbReference type="InParanoid" id="Q8RWY4"/>
<dbReference type="PhylomeDB" id="Q8RWY4"/>
<dbReference type="PRO" id="PR:Q8RWY4"/>
<dbReference type="Proteomes" id="UP000006548">
    <property type="component" value="Chromosome 1"/>
</dbReference>
<dbReference type="ExpressionAtlas" id="Q8RWY4">
    <property type="expression patterns" value="baseline and differential"/>
</dbReference>
<dbReference type="GO" id="GO:0005634">
    <property type="term" value="C:nucleus"/>
    <property type="evidence" value="ECO:0007669"/>
    <property type="project" value="UniProtKB-SubCell"/>
</dbReference>
<dbReference type="GO" id="GO:0003700">
    <property type="term" value="F:DNA-binding transcription factor activity"/>
    <property type="evidence" value="ECO:0000250"/>
    <property type="project" value="TAIR"/>
</dbReference>
<dbReference type="GO" id="GO:0000976">
    <property type="term" value="F:transcription cis-regulatory region binding"/>
    <property type="evidence" value="ECO:0000353"/>
    <property type="project" value="TAIR"/>
</dbReference>
<dbReference type="CDD" id="cd06407">
    <property type="entry name" value="PB1_NLP"/>
    <property type="match status" value="1"/>
</dbReference>
<dbReference type="Gene3D" id="3.10.20.90">
    <property type="entry name" value="Phosphatidylinositol 3-kinase Catalytic Subunit, Chain A, domain 1"/>
    <property type="match status" value="1"/>
</dbReference>
<dbReference type="InterPro" id="IPR045012">
    <property type="entry name" value="NLP"/>
</dbReference>
<dbReference type="InterPro" id="IPR055081">
    <property type="entry name" value="NLP1-9_GAF"/>
</dbReference>
<dbReference type="InterPro" id="IPR053793">
    <property type="entry name" value="PB1-like"/>
</dbReference>
<dbReference type="InterPro" id="IPR000270">
    <property type="entry name" value="PB1_dom"/>
</dbReference>
<dbReference type="InterPro" id="IPR034891">
    <property type="entry name" value="PB1_NLP"/>
</dbReference>
<dbReference type="InterPro" id="IPR003035">
    <property type="entry name" value="RWP-RK_dom"/>
</dbReference>
<dbReference type="PANTHER" id="PTHR32002:SF35">
    <property type="entry name" value="PROTEIN NLP6"/>
    <property type="match status" value="1"/>
</dbReference>
<dbReference type="PANTHER" id="PTHR32002">
    <property type="entry name" value="PROTEIN NLP8"/>
    <property type="match status" value="1"/>
</dbReference>
<dbReference type="Pfam" id="PF22922">
    <property type="entry name" value="GAF_NLP"/>
    <property type="match status" value="1"/>
</dbReference>
<dbReference type="Pfam" id="PF00564">
    <property type="entry name" value="PB1"/>
    <property type="match status" value="1"/>
</dbReference>
<dbReference type="Pfam" id="PF02042">
    <property type="entry name" value="RWP-RK"/>
    <property type="match status" value="1"/>
</dbReference>
<dbReference type="SMART" id="SM00666">
    <property type="entry name" value="PB1"/>
    <property type="match status" value="1"/>
</dbReference>
<dbReference type="SUPFAM" id="SSF54277">
    <property type="entry name" value="CAD &amp; PB1 domains"/>
    <property type="match status" value="1"/>
</dbReference>
<dbReference type="PROSITE" id="PS51745">
    <property type="entry name" value="PB1"/>
    <property type="match status" value="1"/>
</dbReference>
<dbReference type="PROSITE" id="PS51519">
    <property type="entry name" value="RWP_RK"/>
    <property type="match status" value="1"/>
</dbReference>
<sequence length="841" mass="93863">MELDDLDLSGSWPLDQITFASNFKSPVIFSSSEQPFSPLWSFSETSGDVGGELYSAAVAPTRFTDYSVLLASSESETTTKENNQVPSPSWGIMPLENPDSYCAIKAKMTQALRYFKESTGQQHVLAQVWAPVKNRGRYVLTTSGQPFVLGPNSNGLNQYRMVSLTYMFSLDGERDGELGLPGRVFRKKLPEWTPNVQYYSSKEFSRLGHALHYNVQGTLALPVFEPSRQLCVGVVELIMTSPKINYAPEVEKVCKALEAVNLKTSEILNHETTQICNEGRQNALAEILEILTVVCETYKLPLAQTWVPCRHRSVLAFGGGFKKSCSSFDGSCMGKVCMSTSDLAVYVVDAHVWGFRDACAEHHLQKGQGVAGRAFQSGNLCFCRDVTRFCKTDYPLVHYARMFKLTSCFAVCLKSTYTGDDEYVLEFFLPPAITDKSEQDCLLGSLLQTMKQHYSSLKVVSETELCENNMSLEVVEASEDGMVYSKLEPIRIHHPAQISKDYLELNAPEQKVSLNSDFMENNEVDDGVERFQTLDPIPEAKTVKKSERKRGKTEKTISLEVLQQYFAGSLKDAAKSLGVCPTTMKRICRQHGISRWPSRKINKVNRSLTRLKHVIDSVQGADGSLNLTSLSPRPWPHQIPPIDIQLAKNCPPTSTSPLSNLQDVKIENRDAEDSAGSSTSRASCKVNPICETRFRLPTHNQEPSRQVALDDSDSSSKNMTNFWAHLTCQDTASPTILQHKLVSIKATYREDIIRFKISPESVSITELKQQVAKRLKLETAAFELKYLDDDREWVSVSCDADLSECLDTSAAKANTLRLSVHDVTFNFGSSCESSEETMMCL</sequence>